<comment type="function">
    <text evidence="2 4 5 6">D-type phospholipase that hydrolyzes N-acyl-phosphatidylethanolamines (NAPEs) to produce bioactive N-acylethanolamines/fatty acid ethanolamides (NAEs/FAEs) and phosphatidic acid (PubMed:14634025, PubMed:16527816, PubMed:17655883). Cleaves the terminal phosphodiester bond of diacyl- and alkenylacyl-NAPEs, primarily playing a role in the generation of long-chain saturated and monounsaturated NAEs in the brain (By similarity). May control NAPE homeostasis in dopaminergic neuron membranes and regulate neuron survival, partly through RAC1 activation (By similarity). As a regulator of lipid metabolism in the adipose tissue, mediates the crosstalk between adipocytes, gut microbiota and immune cells to control body temperature and weight. In particular, regulates energy homeostasis by promoting cold-induced brown or beige adipocyte differentiation program to generate heat from fatty acids and glucose. Has limited D-type phospholipase activity toward N-acyl lyso-NAPEs (By similarity).</text>
</comment>
<comment type="catalytic activity">
    <reaction evidence="5">
        <text>an N-acyl-1,2-diacyl-sn-glycero-3-phosphoethanolamine + H2O = an N-acylethanolamine + a 1,2-diacyl-sn-glycero-3-phosphate + H(+)</text>
        <dbReference type="Rhea" id="RHEA:33159"/>
        <dbReference type="ChEBI" id="CHEBI:15377"/>
        <dbReference type="ChEBI" id="CHEBI:15378"/>
        <dbReference type="ChEBI" id="CHEBI:52640"/>
        <dbReference type="ChEBI" id="CHEBI:58608"/>
        <dbReference type="ChEBI" id="CHEBI:62537"/>
        <dbReference type="EC" id="3.1.4.54"/>
    </reaction>
    <physiologicalReaction direction="left-to-right" evidence="9">
        <dbReference type="Rhea" id="RHEA:33160"/>
    </physiologicalReaction>
</comment>
<comment type="catalytic activity">
    <reaction evidence="5">
        <text>N-butanoyl-1-hexadecanoyl-2-(9Z,12Z-octadecadienoyl)-sn-glycero-3-phosphoethanolamine + H2O = N-butanoyl ethanolamine + 1-hexadecanoyl-2-(9Z,12Z-octadecadienoyl)-sn-glycero-3-phosphate + H(+)</text>
        <dbReference type="Rhea" id="RHEA:45620"/>
        <dbReference type="ChEBI" id="CHEBI:15377"/>
        <dbReference type="ChEBI" id="CHEBI:15378"/>
        <dbReference type="ChEBI" id="CHEBI:72860"/>
        <dbReference type="ChEBI" id="CHEBI:85298"/>
        <dbReference type="ChEBI" id="CHEBI:85304"/>
    </reaction>
    <physiologicalReaction direction="left-to-right" evidence="9">
        <dbReference type="Rhea" id="RHEA:45621"/>
    </physiologicalReaction>
</comment>
<comment type="catalytic activity">
    <reaction evidence="5">
        <text>N-hexanoyl-1-hexadecanoyl-2-(9Z,12Z-octadecadienoyl)-sn-glycero-3-phosphoethanolamine + H2O = N-hexanoyl ethanolamine + 1-hexadecanoyl-2-(9Z,12Z-octadecadienoyl)-sn-glycero-3-phosphate + H(+)</text>
        <dbReference type="Rhea" id="RHEA:45616"/>
        <dbReference type="ChEBI" id="CHEBI:15377"/>
        <dbReference type="ChEBI" id="CHEBI:15378"/>
        <dbReference type="ChEBI" id="CHEBI:72860"/>
        <dbReference type="ChEBI" id="CHEBI:85297"/>
        <dbReference type="ChEBI" id="CHEBI:85303"/>
    </reaction>
    <physiologicalReaction direction="left-to-right" evidence="9">
        <dbReference type="Rhea" id="RHEA:45617"/>
    </physiologicalReaction>
</comment>
<comment type="catalytic activity">
    <reaction evidence="5">
        <text>N-octanoyl-1-hexadecanoyl-2-(9Z,12Z-octadecadienoyl)-sn-glycero-3-phosphoethanolamine + H2O = N-octanoyl ethanolamine + 1-hexadecanoyl-2-(9Z,12Z-octadecadienoyl)-sn-glycero-3-phosphate + H(+)</text>
        <dbReference type="Rhea" id="RHEA:45612"/>
        <dbReference type="ChEBI" id="CHEBI:15377"/>
        <dbReference type="ChEBI" id="CHEBI:15378"/>
        <dbReference type="ChEBI" id="CHEBI:72860"/>
        <dbReference type="ChEBI" id="CHEBI:85296"/>
        <dbReference type="ChEBI" id="CHEBI:85302"/>
    </reaction>
    <physiologicalReaction direction="left-to-right" evidence="9">
        <dbReference type="Rhea" id="RHEA:45613"/>
    </physiologicalReaction>
</comment>
<comment type="catalytic activity">
    <reaction evidence="5">
        <text>N-decanoyl-1-hexadecanoyl-2-(9Z,12Z-octadecadienoyl)-sn-glycero-3-phosphoethanolamine + H2O = N-decanoyl ethanolamine + 1-hexadecanoyl-2-(9Z,12Z-octadecadienoyl)-sn-glycero-3-phosphate + H(+)</text>
        <dbReference type="Rhea" id="RHEA:45608"/>
        <dbReference type="ChEBI" id="CHEBI:15377"/>
        <dbReference type="ChEBI" id="CHEBI:15378"/>
        <dbReference type="ChEBI" id="CHEBI:72860"/>
        <dbReference type="ChEBI" id="CHEBI:85295"/>
        <dbReference type="ChEBI" id="CHEBI:85301"/>
    </reaction>
    <physiologicalReaction direction="left-to-right" evidence="9">
        <dbReference type="Rhea" id="RHEA:45609"/>
    </physiologicalReaction>
</comment>
<comment type="catalytic activity">
    <reaction evidence="5">
        <text>N-dodecanoyl-1,2-di-(9Z-octadecenoyl)-sn-glycero-3-phosphoethanolamine + H2O = N-dodecanoylethanolamine + 1,2-di-(9Z-octadecenoyl)-sn-glycero-3-phosphate + H(+)</text>
        <dbReference type="Rhea" id="RHEA:45556"/>
        <dbReference type="ChEBI" id="CHEBI:15377"/>
        <dbReference type="ChEBI" id="CHEBI:15378"/>
        <dbReference type="ChEBI" id="CHEBI:74546"/>
        <dbReference type="ChEBI" id="CHEBI:85263"/>
        <dbReference type="ChEBI" id="CHEBI:85294"/>
    </reaction>
    <physiologicalReaction direction="left-to-right" evidence="9">
        <dbReference type="Rhea" id="RHEA:45557"/>
    </physiologicalReaction>
</comment>
<comment type="catalytic activity">
    <reaction evidence="5">
        <text>N-tetradecanoyl-1,2-di-(9Z-octadecenoyl)-sn-glycero-3-phosphoethanolamine + H2O = N-tetradecanoylethanolamine + 1,2-di-(9Z-octadecenoyl)-sn-glycero-3-phosphate + H(+)</text>
        <dbReference type="Rhea" id="RHEA:45552"/>
        <dbReference type="ChEBI" id="CHEBI:15377"/>
        <dbReference type="ChEBI" id="CHEBI:15378"/>
        <dbReference type="ChEBI" id="CHEBI:74546"/>
        <dbReference type="ChEBI" id="CHEBI:85262"/>
        <dbReference type="ChEBI" id="CHEBI:85293"/>
    </reaction>
    <physiologicalReaction direction="left-to-right" evidence="9">
        <dbReference type="Rhea" id="RHEA:45553"/>
    </physiologicalReaction>
</comment>
<comment type="catalytic activity">
    <reaction evidence="5 6">
        <text>N-hexadecanoyl-1,2-di-(9Z-octadecenoyl)-sn-glycero-3-phosphoethanolamine + H2O = N-hexadecanoylethanolamine + 1,2-di-(9Z-octadecenoyl)-sn-glycero-3-phosphate + H(+)</text>
        <dbReference type="Rhea" id="RHEA:45540"/>
        <dbReference type="ChEBI" id="CHEBI:15377"/>
        <dbReference type="ChEBI" id="CHEBI:15378"/>
        <dbReference type="ChEBI" id="CHEBI:71464"/>
        <dbReference type="ChEBI" id="CHEBI:74546"/>
        <dbReference type="ChEBI" id="CHEBI:78097"/>
    </reaction>
    <physiologicalReaction direction="left-to-right" evidence="9 10">
        <dbReference type="Rhea" id="RHEA:45541"/>
    </physiologicalReaction>
</comment>
<comment type="catalytic activity">
    <reaction evidence="2">
        <text>N,1-dihexadecanoyl-2-(9Z,12Z-octadecadienoyl)-sn-glycero-3-phosphoethanolamine + H2O = 1-hexadecanoyl-2-(9Z,12Z-octadecadienoyl)-sn-glycero-3-phosphate + N-hexadecanoylethanolamine + H(+)</text>
        <dbReference type="Rhea" id="RHEA:45596"/>
        <dbReference type="ChEBI" id="CHEBI:15377"/>
        <dbReference type="ChEBI" id="CHEBI:15378"/>
        <dbReference type="ChEBI" id="CHEBI:71464"/>
        <dbReference type="ChEBI" id="CHEBI:72860"/>
        <dbReference type="ChEBI" id="CHEBI:85334"/>
    </reaction>
    <physiologicalReaction direction="left-to-right" evidence="2">
        <dbReference type="Rhea" id="RHEA:45597"/>
    </physiologicalReaction>
</comment>
<comment type="catalytic activity">
    <reaction evidence="5 6">
        <text>N-octadecanoyl-1,2-di-(9Z-octadecenoyl)-sn-glycero-3-phosphoethanolamine + H2O = N-octadecanoyl ethanolamine + 1,2-di-(9Z-octadecenoyl)-sn-glycero-3-phosphate + H(+)</text>
        <dbReference type="Rhea" id="RHEA:45536"/>
        <dbReference type="ChEBI" id="CHEBI:15377"/>
        <dbReference type="ChEBI" id="CHEBI:15378"/>
        <dbReference type="ChEBI" id="CHEBI:74546"/>
        <dbReference type="ChEBI" id="CHEBI:85292"/>
        <dbReference type="ChEBI" id="CHEBI:85299"/>
    </reaction>
    <physiologicalReaction direction="left-to-right" evidence="9 10">
        <dbReference type="Rhea" id="RHEA:45537"/>
    </physiologicalReaction>
</comment>
<comment type="catalytic activity">
    <reaction evidence="5 6">
        <text>N,1,2-tri-(9Z-octadecenoyl)-sn-glycero-3-phosphoethanolamine + H2O = N-(9Z-octadecenoyl) ethanolamine + 1,2-di-(9Z-octadecenoyl)-sn-glycero-3-phosphate + H(+)</text>
        <dbReference type="Rhea" id="RHEA:45532"/>
        <dbReference type="ChEBI" id="CHEBI:15377"/>
        <dbReference type="ChEBI" id="CHEBI:15378"/>
        <dbReference type="ChEBI" id="CHEBI:71466"/>
        <dbReference type="ChEBI" id="CHEBI:74546"/>
        <dbReference type="ChEBI" id="CHEBI:85291"/>
    </reaction>
    <physiologicalReaction direction="left-to-right" evidence="9 10">
        <dbReference type="Rhea" id="RHEA:45533"/>
    </physiologicalReaction>
</comment>
<comment type="catalytic activity">
    <reaction evidence="1">
        <text>N-(5Z,8Z,11Z,14Z-eicosatetraenoyl)-1,2-diacyl-sn-glycero-3-phosphoethanolamine + H2O = N-(5Z,8Z,11Z,14Z-eicosatetraenoyl)-ethanolamine + a 1,2-diacyl-sn-glycero-3-phosphate + H(+)</text>
        <dbReference type="Rhea" id="RHEA:56548"/>
        <dbReference type="ChEBI" id="CHEBI:2700"/>
        <dbReference type="ChEBI" id="CHEBI:15377"/>
        <dbReference type="ChEBI" id="CHEBI:15378"/>
        <dbReference type="ChEBI" id="CHEBI:58608"/>
        <dbReference type="ChEBI" id="CHEBI:140532"/>
    </reaction>
    <physiologicalReaction direction="left-to-right" evidence="1">
        <dbReference type="Rhea" id="RHEA:56549"/>
    </physiologicalReaction>
</comment>
<comment type="catalytic activity">
    <reaction evidence="5 6">
        <text>N-(5Z,8Z,11Z,14Z-eicosatetraenoyl)-1,2-di-(9Z-octadecenoyl)-sn-glycero-3-phosphoethanolamine + H2O = N-(5Z,8Z,11Z,14Z-eicosatetraenoyl)-ethanolamine + 1,2-di-(9Z-octadecenoyl)-sn-glycero-3-phosphate + H(+)</text>
        <dbReference type="Rhea" id="RHEA:45528"/>
        <dbReference type="ChEBI" id="CHEBI:2700"/>
        <dbReference type="ChEBI" id="CHEBI:15377"/>
        <dbReference type="ChEBI" id="CHEBI:15378"/>
        <dbReference type="ChEBI" id="CHEBI:74546"/>
        <dbReference type="ChEBI" id="CHEBI:85277"/>
    </reaction>
    <physiologicalReaction direction="left-to-right" evidence="9 10">
        <dbReference type="Rhea" id="RHEA:45529"/>
    </physiologicalReaction>
</comment>
<comment type="catalytic activity">
    <reaction evidence="2">
        <text>1-O-(1Z-octadecenoyl)-2-(9Z-octadecenoyl)-sn-glycero-3-phospho-N-hexadecanoyl-ethanolamine + H2O = 1-O-(1Z-octadecenoyl)-2-(9Z-octadecenoyl)-sn-glycero-3-phosphate + N-hexadecanoylethanolamine + H(+)</text>
        <dbReference type="Rhea" id="RHEA:56464"/>
        <dbReference type="ChEBI" id="CHEBI:15377"/>
        <dbReference type="ChEBI" id="CHEBI:15378"/>
        <dbReference type="ChEBI" id="CHEBI:71464"/>
        <dbReference type="ChEBI" id="CHEBI:138663"/>
        <dbReference type="ChEBI" id="CHEBI:140452"/>
    </reaction>
    <physiologicalReaction direction="left-to-right" evidence="2">
        <dbReference type="Rhea" id="RHEA:56465"/>
    </physiologicalReaction>
</comment>
<comment type="catalytic activity">
    <reaction evidence="2">
        <text>N,1-diacyl-sn-glycero-3-phosphoethanolamine + H2O = an N-acylethanolamine + a 1-acyl-sn-glycero-3-phosphate + H(+)</text>
        <dbReference type="Rhea" id="RHEA:53164"/>
        <dbReference type="ChEBI" id="CHEBI:15377"/>
        <dbReference type="ChEBI" id="CHEBI:15378"/>
        <dbReference type="ChEBI" id="CHEBI:52640"/>
        <dbReference type="ChEBI" id="CHEBI:57970"/>
        <dbReference type="ChEBI" id="CHEBI:85216"/>
    </reaction>
    <physiologicalReaction direction="left-to-right" evidence="2">
        <dbReference type="Rhea" id="RHEA:53165"/>
    </physiologicalReaction>
</comment>
<comment type="catalytic activity">
    <reaction evidence="2">
        <text>N,1-dihexadecanoyl-sn-glycero-3-phosphoethanolamine + H2O = N-hexadecanoylethanolamine + 1-hexadecanoyl-sn-glycero-3-phosphate + H(+)</text>
        <dbReference type="Rhea" id="RHEA:45592"/>
        <dbReference type="ChEBI" id="CHEBI:15377"/>
        <dbReference type="ChEBI" id="CHEBI:15378"/>
        <dbReference type="ChEBI" id="CHEBI:57518"/>
        <dbReference type="ChEBI" id="CHEBI:71464"/>
        <dbReference type="ChEBI" id="CHEBI:85335"/>
    </reaction>
    <physiologicalReaction direction="left-to-right" evidence="2">
        <dbReference type="Rhea" id="RHEA:45593"/>
    </physiologicalReaction>
</comment>
<comment type="catalytic activity">
    <reaction evidence="2">
        <text>N-(5Z,8Z,11Z,14Z-eicosatetraenoyl)-1-(9Z-octadecenoyl)-sn-glycero-3-phosphoethanolamine + H2O = N-(5Z,8Z,11Z,14Z-eicosatetraenoyl)-ethanolamine + 1-(9Z-octadecenoyl)-sn-glycero-3-phosphate + H(+)</text>
        <dbReference type="Rhea" id="RHEA:45544"/>
        <dbReference type="ChEBI" id="CHEBI:2700"/>
        <dbReference type="ChEBI" id="CHEBI:15377"/>
        <dbReference type="ChEBI" id="CHEBI:15378"/>
        <dbReference type="ChEBI" id="CHEBI:74544"/>
        <dbReference type="ChEBI" id="CHEBI:85223"/>
    </reaction>
    <physiologicalReaction direction="left-to-right" evidence="2">
        <dbReference type="Rhea" id="RHEA:45545"/>
    </physiologicalReaction>
</comment>
<comment type="cofactor">
    <cofactor evidence="9">
        <name>Zn(2+)</name>
        <dbReference type="ChEBI" id="CHEBI:29105"/>
    </cofactor>
    <text evidence="1">Binds 2 zinc divalent cations per subunit.</text>
</comment>
<comment type="activity regulation">
    <text evidence="1 6">Activated by divalent cations (PubMed:17655883). Activated by bile acids (By similarity). Activated by membrane phospholipids such as phosphatidylethanolamines. Inhibited by cardiolipins (PubMed:17655883).</text>
</comment>
<comment type="biophysicochemical properties">
    <kinetics>
        <KM evidence="6">4 uM for N-hexadecanoyl-1,2-di-(9Z-octadecenoyl)-sn-glycero-3-phosphoethanolamine (in the presence of calcium ions)</KM>
        <KM evidence="6">1.7 uM for N-hexadecanoyl-1,2-di-(9Z-octadecenoyl)-sn-glycero-3-phosphoethanolamine (in the presence of calcium ions and phosphatidylethanolamine)</KM>
        <Vmax evidence="6">790.6 nmol/min/mg enzyme toward N-hexadecanoyl-1,2-di-(9Z-octadecenoyl)-sn-glycero-3-phosphoethanolamine (in the presence of calcium ions)</Vmax>
        <Vmax evidence="6">1263.0 nmol/min/mg enzyme toward N-hexadecanoyl-1,2-di-(9Z-octadecenoyl)-sn-glycero-3-phosphoethanolamine (in the presence of calcium ions and phosphatidylethanolamine)</Vmax>
    </kinetics>
</comment>
<comment type="subunit">
    <text evidence="1">Homodimer. Bile acids promote the assembly of inactive monomers into an active dimer and enable catalysis.</text>
</comment>
<comment type="subcellular location">
    <subcellularLocation>
        <location evidence="1">Golgi apparatus membrane</location>
        <topology evidence="1">Peripheral membrane protein</topology>
    </subcellularLocation>
    <subcellularLocation>
        <location evidence="1">Early endosome membrane</location>
        <topology evidence="1">Peripheral membrane protein</topology>
    </subcellularLocation>
    <subcellularLocation>
        <location evidence="1">Nucleus envelope</location>
    </subcellularLocation>
    <subcellularLocation>
        <location evidence="1">Nucleus</location>
        <location evidence="1">Nucleoplasm</location>
    </subcellularLocation>
    <text evidence="1">Localized in the proximity of the cellular membranes likely through interaction with membrane phospholipids.</text>
</comment>
<comment type="tissue specificity">
    <text evidence="2">Widely expressed. Highest expression in brain, kidney and testis (at protein level). Expressed in adipose tissue (at protein level).</text>
</comment>
<comment type="similarity">
    <text evidence="8">Belongs to the NAPE-PLD family.</text>
</comment>
<keyword id="KW-0007">Acetylation</keyword>
<keyword id="KW-0903">Direct protein sequencing</keyword>
<keyword id="KW-0967">Endosome</keyword>
<keyword id="KW-0333">Golgi apparatus</keyword>
<keyword id="KW-0378">Hydrolase</keyword>
<keyword id="KW-0442">Lipid degradation</keyword>
<keyword id="KW-0443">Lipid metabolism</keyword>
<keyword id="KW-0472">Membrane</keyword>
<keyword id="KW-0479">Metal-binding</keyword>
<keyword id="KW-0539">Nucleus</keyword>
<keyword id="KW-0595">Phospholipid degradation</keyword>
<keyword id="KW-1208">Phospholipid metabolism</keyword>
<keyword id="KW-1185">Reference proteome</keyword>
<keyword id="KW-0862">Zinc</keyword>
<gene>
    <name type="primary">Napepld</name>
</gene>
<name>NAPEP_RAT</name>
<protein>
    <recommendedName>
        <fullName>N-acyl-phosphatidylethanolamine-hydrolyzing phospholipase D</fullName>
        <shortName>N-acyl phosphatidylethanolamine phospholipase D</shortName>
        <shortName evidence="7">NAPE-PLD</shortName>
        <shortName>NAPE-hydrolyzing phospholipase D</shortName>
        <ecNumber evidence="5">3.1.4.54</ecNumber>
    </recommendedName>
</protein>
<sequence>MDENENSQSPAPSHQYPKETLRKRQNSVQNSGGSESSRLSRKSFKLDYRLEEDVTKSKKGKDGRFVNPWPTWKNVSIPNVLRWLIMEKDHSSVPGSKEELDKELPVLKPYFISDPEEAGVREAGLRVTWLGHATLMVEMDELILLTDPMFSSRASPSQYMGPKRFRRPPCTISELPPIDAVLISHNHYDHLDYGSVLALNERFGSELRWFVPLGLLDWMQKCGCENVIELDWWEENCVPGHDKVTFVFTPSQHWCKRTLLDDNKVLWGSWSVLGPWNRFFFAGDTGYCPAFEEIGKRFGPFDLAAIPIGAYEPRWFMKYQHADPEDAVRIHIDVQAKRSVAIHWGTFALANEHYLEPPVKLNEALERYGLKSEDFFILKHGESRYLNTDDKAFEET</sequence>
<dbReference type="EC" id="3.1.4.54" evidence="5"/>
<dbReference type="EMBL" id="AB112351">
    <property type="protein sequence ID" value="BAD02398.1"/>
    <property type="molecule type" value="mRNA"/>
</dbReference>
<dbReference type="RefSeq" id="NP_955413.1">
    <property type="nucleotide sequence ID" value="NM_199381.2"/>
</dbReference>
<dbReference type="RefSeq" id="XP_006235973.1">
    <property type="nucleotide sequence ID" value="XM_006235911.3"/>
</dbReference>
<dbReference type="RefSeq" id="XP_008760861.1">
    <property type="nucleotide sequence ID" value="XM_008762639.2"/>
</dbReference>
<dbReference type="RefSeq" id="XP_017448006.1">
    <property type="nucleotide sequence ID" value="XM_017592517.1"/>
</dbReference>
<dbReference type="RefSeq" id="XP_038963172.1">
    <property type="nucleotide sequence ID" value="XM_039107244.2"/>
</dbReference>
<dbReference type="RefSeq" id="XP_063141777.1">
    <property type="nucleotide sequence ID" value="XM_063285707.1"/>
</dbReference>
<dbReference type="RefSeq" id="XP_063141778.1">
    <property type="nucleotide sequence ID" value="XM_063285708.1"/>
</dbReference>
<dbReference type="SMR" id="Q769K2"/>
<dbReference type="FunCoup" id="Q769K2">
    <property type="interactions" value="810"/>
</dbReference>
<dbReference type="STRING" id="10116.ENSRNOP00000015322"/>
<dbReference type="SwissLipids" id="SLP:000001131"/>
<dbReference type="iPTMnet" id="Q769K2"/>
<dbReference type="PhosphoSitePlus" id="Q769K2"/>
<dbReference type="PaxDb" id="10116-ENSRNOP00000015322"/>
<dbReference type="Ensembl" id="ENSRNOT00000116230.1">
    <property type="protein sequence ID" value="ENSRNOP00000082705.1"/>
    <property type="gene ID" value="ENSRNOG00000011363.5"/>
</dbReference>
<dbReference type="GeneID" id="296757"/>
<dbReference type="KEGG" id="rno:296757"/>
<dbReference type="AGR" id="RGD:735197"/>
<dbReference type="CTD" id="222236"/>
<dbReference type="RGD" id="735197">
    <property type="gene designation" value="Napepld"/>
</dbReference>
<dbReference type="eggNOG" id="KOG3798">
    <property type="taxonomic scope" value="Eukaryota"/>
</dbReference>
<dbReference type="GeneTree" id="ENSGT00390000017990"/>
<dbReference type="InParanoid" id="Q769K2"/>
<dbReference type="PhylomeDB" id="Q769K2"/>
<dbReference type="BRENDA" id="3.1.4.54">
    <property type="organism ID" value="5301"/>
</dbReference>
<dbReference type="PRO" id="PR:Q769K2"/>
<dbReference type="Proteomes" id="UP000002494">
    <property type="component" value="Chromosome 4"/>
</dbReference>
<dbReference type="Bgee" id="ENSRNOG00000011363">
    <property type="expression patterns" value="Expressed in heart and 18 other cell types or tissues"/>
</dbReference>
<dbReference type="ExpressionAtlas" id="Q769K2">
    <property type="expression patterns" value="baseline and differential"/>
</dbReference>
<dbReference type="GO" id="GO:0005737">
    <property type="term" value="C:cytoplasm"/>
    <property type="evidence" value="ECO:0000318"/>
    <property type="project" value="GO_Central"/>
</dbReference>
<dbReference type="GO" id="GO:0005769">
    <property type="term" value="C:early endosome"/>
    <property type="evidence" value="ECO:0000250"/>
    <property type="project" value="UniProtKB"/>
</dbReference>
<dbReference type="GO" id="GO:0031901">
    <property type="term" value="C:early endosome membrane"/>
    <property type="evidence" value="ECO:0007669"/>
    <property type="project" value="UniProtKB-SubCell"/>
</dbReference>
<dbReference type="GO" id="GO:0005794">
    <property type="term" value="C:Golgi apparatus"/>
    <property type="evidence" value="ECO:0000250"/>
    <property type="project" value="UniProtKB"/>
</dbReference>
<dbReference type="GO" id="GO:0000139">
    <property type="term" value="C:Golgi membrane"/>
    <property type="evidence" value="ECO:0007669"/>
    <property type="project" value="UniProtKB-SubCell"/>
</dbReference>
<dbReference type="GO" id="GO:0098686">
    <property type="term" value="C:hippocampal mossy fiber to CA3 synapse"/>
    <property type="evidence" value="ECO:0000266"/>
    <property type="project" value="RGD"/>
</dbReference>
<dbReference type="GO" id="GO:0043005">
    <property type="term" value="C:neuron projection"/>
    <property type="evidence" value="ECO:0000318"/>
    <property type="project" value="GO_Central"/>
</dbReference>
<dbReference type="GO" id="GO:0043025">
    <property type="term" value="C:neuronal cell body"/>
    <property type="evidence" value="ECO:0000318"/>
    <property type="project" value="GO_Central"/>
</dbReference>
<dbReference type="GO" id="GO:0005635">
    <property type="term" value="C:nuclear envelope"/>
    <property type="evidence" value="ECO:0000250"/>
    <property type="project" value="UniProtKB"/>
</dbReference>
<dbReference type="GO" id="GO:0005654">
    <property type="term" value="C:nucleoplasm"/>
    <property type="evidence" value="ECO:0000250"/>
    <property type="project" value="UniProtKB"/>
</dbReference>
<dbReference type="GO" id="GO:0045211">
    <property type="term" value="C:postsynaptic membrane"/>
    <property type="evidence" value="ECO:0000266"/>
    <property type="project" value="RGD"/>
</dbReference>
<dbReference type="GO" id="GO:0098793">
    <property type="term" value="C:presynapse"/>
    <property type="evidence" value="ECO:0000266"/>
    <property type="project" value="RGD"/>
</dbReference>
<dbReference type="GO" id="GO:0042734">
    <property type="term" value="C:presynaptic membrane"/>
    <property type="evidence" value="ECO:0000266"/>
    <property type="project" value="RGD"/>
</dbReference>
<dbReference type="GO" id="GO:0030868">
    <property type="term" value="C:smooth endoplasmic reticulum membrane"/>
    <property type="evidence" value="ECO:0000266"/>
    <property type="project" value="RGD"/>
</dbReference>
<dbReference type="GO" id="GO:0032052">
    <property type="term" value="F:bile acid binding"/>
    <property type="evidence" value="ECO:0000266"/>
    <property type="project" value="RGD"/>
</dbReference>
<dbReference type="GO" id="GO:0042802">
    <property type="term" value="F:identical protein binding"/>
    <property type="evidence" value="ECO:0000266"/>
    <property type="project" value="RGD"/>
</dbReference>
<dbReference type="GO" id="GO:0070290">
    <property type="term" value="F:N-acylphosphatidylethanolamine-specific phospholipase D activity"/>
    <property type="evidence" value="ECO:0000250"/>
    <property type="project" value="UniProtKB"/>
</dbReference>
<dbReference type="GO" id="GO:0004620">
    <property type="term" value="F:phospholipase activity"/>
    <property type="evidence" value="ECO:0000314"/>
    <property type="project" value="RGD"/>
</dbReference>
<dbReference type="GO" id="GO:0008270">
    <property type="term" value="F:zinc ion binding"/>
    <property type="evidence" value="ECO:0000250"/>
    <property type="project" value="UniProtKB"/>
</dbReference>
<dbReference type="GO" id="GO:0048874">
    <property type="term" value="P:host-mediated regulation of intestinal microbiota composition"/>
    <property type="evidence" value="ECO:0000250"/>
    <property type="project" value="UniProtKB"/>
</dbReference>
<dbReference type="GO" id="GO:0070291">
    <property type="term" value="P:N-acylethanolamine metabolic process"/>
    <property type="evidence" value="ECO:0000266"/>
    <property type="project" value="RGD"/>
</dbReference>
<dbReference type="GO" id="GO:0070292">
    <property type="term" value="P:N-acylphosphatidylethanolamine metabolic process"/>
    <property type="evidence" value="ECO:0000250"/>
    <property type="project" value="UniProtKB"/>
</dbReference>
<dbReference type="GO" id="GO:1903999">
    <property type="term" value="P:negative regulation of eating behavior"/>
    <property type="evidence" value="ECO:0000315"/>
    <property type="project" value="RGD"/>
</dbReference>
<dbReference type="GO" id="GO:0009395">
    <property type="term" value="P:phospholipid catabolic process"/>
    <property type="evidence" value="ECO:0007669"/>
    <property type="project" value="UniProtKB-KW"/>
</dbReference>
<dbReference type="GO" id="GO:0006644">
    <property type="term" value="P:phospholipid metabolic process"/>
    <property type="evidence" value="ECO:0000314"/>
    <property type="project" value="RGD"/>
</dbReference>
<dbReference type="GO" id="GO:0090336">
    <property type="term" value="P:positive regulation of brown fat cell differentiation"/>
    <property type="evidence" value="ECO:0000250"/>
    <property type="project" value="UniProtKB"/>
</dbReference>
<dbReference type="GO" id="GO:0050729">
    <property type="term" value="P:positive regulation of inflammatory response"/>
    <property type="evidence" value="ECO:0000250"/>
    <property type="project" value="UniProtKB"/>
</dbReference>
<dbReference type="GO" id="GO:0035900">
    <property type="term" value="P:response to isolation stress"/>
    <property type="evidence" value="ECO:0000270"/>
    <property type="project" value="RGD"/>
</dbReference>
<dbReference type="GO" id="GO:0001659">
    <property type="term" value="P:temperature homeostasis"/>
    <property type="evidence" value="ECO:0000250"/>
    <property type="project" value="UniProtKB"/>
</dbReference>
<dbReference type="FunFam" id="3.60.15.10:FF:000016">
    <property type="entry name" value="N-acyl-phosphatidylethanolamine-hydrolyzing phospholipase D, putative"/>
    <property type="match status" value="1"/>
</dbReference>
<dbReference type="Gene3D" id="3.60.15.10">
    <property type="entry name" value="Ribonuclease Z/Hydroxyacylglutathione hydrolase-like"/>
    <property type="match status" value="1"/>
</dbReference>
<dbReference type="InterPro" id="IPR001279">
    <property type="entry name" value="Metallo-B-lactamas"/>
</dbReference>
<dbReference type="InterPro" id="IPR024884">
    <property type="entry name" value="NAPE-PLD"/>
</dbReference>
<dbReference type="InterPro" id="IPR036866">
    <property type="entry name" value="RibonucZ/Hydroxyglut_hydro"/>
</dbReference>
<dbReference type="PANTHER" id="PTHR15032">
    <property type="entry name" value="N-ACYL-PHOSPHATIDYLETHANOLAMINE-HYDROLYZING PHOSPHOLIPASE D"/>
    <property type="match status" value="1"/>
</dbReference>
<dbReference type="PANTHER" id="PTHR15032:SF4">
    <property type="entry name" value="N-ACYL-PHOSPHATIDYLETHANOLAMINE-HYDROLYZING PHOSPHOLIPASE D"/>
    <property type="match status" value="1"/>
</dbReference>
<dbReference type="Pfam" id="PF12706">
    <property type="entry name" value="Lactamase_B_2"/>
    <property type="match status" value="1"/>
</dbReference>
<dbReference type="PIRSF" id="PIRSF038896">
    <property type="entry name" value="NAPE-PLD"/>
    <property type="match status" value="1"/>
</dbReference>
<dbReference type="SUPFAM" id="SSF56281">
    <property type="entry name" value="Metallo-hydrolase/oxidoreductase"/>
    <property type="match status" value="1"/>
</dbReference>
<organism>
    <name type="scientific">Rattus norvegicus</name>
    <name type="common">Rat</name>
    <dbReference type="NCBI Taxonomy" id="10116"/>
    <lineage>
        <taxon>Eukaryota</taxon>
        <taxon>Metazoa</taxon>
        <taxon>Chordata</taxon>
        <taxon>Craniata</taxon>
        <taxon>Vertebrata</taxon>
        <taxon>Euteleostomi</taxon>
        <taxon>Mammalia</taxon>
        <taxon>Eutheria</taxon>
        <taxon>Euarchontoglires</taxon>
        <taxon>Glires</taxon>
        <taxon>Rodentia</taxon>
        <taxon>Myomorpha</taxon>
        <taxon>Muroidea</taxon>
        <taxon>Muridae</taxon>
        <taxon>Murinae</taxon>
        <taxon>Rattus</taxon>
    </lineage>
</organism>
<reference key="1">
    <citation type="journal article" date="2004" name="J. Biol. Chem.">
        <title>Molecular characterization of a phospholipase D generating anandamide and its congeners.</title>
        <authorList>
            <person name="Okamoto Y."/>
            <person name="Morishita J."/>
            <person name="Tsuboi K."/>
            <person name="Tonai T."/>
            <person name="Ueda N."/>
        </authorList>
    </citation>
    <scope>NUCLEOTIDE SEQUENCE [MRNA]</scope>
    <scope>PROTEIN SEQUENCE OF 103-114 AND 368-379</scope>
    <scope>SUBCELLULAR LOCATION</scope>
    <scope>SUBUNIT</scope>
    <scope>FUNCTION</scope>
</reference>
<reference key="2">
    <citation type="journal article" date="2006" name="J. Biol. Chem.">
        <title>Functional analysis of the purified anandamide-generating phospholipase D as a member of the metallo-beta-lactamase family.</title>
        <authorList>
            <person name="Wang J."/>
            <person name="Okamoto Y."/>
            <person name="Morishita J."/>
            <person name="Tsuboi K."/>
            <person name="Miyatake A."/>
            <person name="Ueda N."/>
        </authorList>
    </citation>
    <scope>FUNCTION</scope>
    <scope>COFACTOR</scope>
    <scope>ACTIVITY REGULATION</scope>
    <scope>SUBUNIT</scope>
    <scope>POTENTIAL ZINC-BINDING SITES</scope>
    <scope>MUTAGENESIS OF ASP-147; CYS-170; HIS-185; HIS-187; ASP-189; HIS-190; LEU-207; CYS-222; CYS-224; CYS-237; HIS-253; CYS-255; ASP-284; CYS-288; HIS-321; HIS-331; HIS-343; HIS-353 AND HIS-380</scope>
</reference>
<reference key="3">
    <citation type="journal article" date="2008" name="Neuropharmacology">
        <title>The stimulatory effect of phosphatidylethanolamine on N-acylphosphatidylethanolamine-hydrolyzing phospholipase D (NAPE-PLD).</title>
        <authorList>
            <person name="Wang J."/>
            <person name="Okamoto Y."/>
            <person name="Tsuboi K."/>
            <person name="Ueda N."/>
        </authorList>
    </citation>
    <scope>FUNCTION</scope>
    <scope>CATALYTIC ACTIVITY</scope>
    <scope>BIOPHYSICOCHEMICAL PROPERTIES</scope>
    <scope>ACTIVITY REGULATION</scope>
</reference>
<accession>Q769K2</accession>
<evidence type="ECO:0000250" key="1">
    <source>
        <dbReference type="UniProtKB" id="Q6IQ20"/>
    </source>
</evidence>
<evidence type="ECO:0000250" key="2">
    <source>
        <dbReference type="UniProtKB" id="Q8BH82"/>
    </source>
</evidence>
<evidence type="ECO:0000256" key="3">
    <source>
        <dbReference type="SAM" id="MobiDB-lite"/>
    </source>
</evidence>
<evidence type="ECO:0000269" key="4">
    <source>
    </source>
</evidence>
<evidence type="ECO:0000269" key="5">
    <source>
    </source>
</evidence>
<evidence type="ECO:0000269" key="6">
    <source>
    </source>
</evidence>
<evidence type="ECO:0000303" key="7">
    <source>
    </source>
</evidence>
<evidence type="ECO:0000305" key="8"/>
<evidence type="ECO:0000305" key="9">
    <source>
    </source>
</evidence>
<evidence type="ECO:0000305" key="10">
    <source>
    </source>
</evidence>
<feature type="chain" id="PRO_0000318162" description="N-acyl-phosphatidylethanolamine-hydrolyzing phospholipase D">
    <location>
        <begin position="1"/>
        <end position="396"/>
    </location>
</feature>
<feature type="region of interest" description="Disordered" evidence="3">
    <location>
        <begin position="1"/>
        <end position="41"/>
    </location>
</feature>
<feature type="compositionally biased region" description="Polar residues" evidence="3">
    <location>
        <begin position="1"/>
        <end position="12"/>
    </location>
</feature>
<feature type="compositionally biased region" description="Polar residues" evidence="3">
    <location>
        <begin position="26"/>
        <end position="37"/>
    </location>
</feature>
<feature type="binding site" evidence="1">
    <location>
        <position position="185"/>
    </location>
    <ligand>
        <name>Zn(2+)</name>
        <dbReference type="ChEBI" id="CHEBI:29105"/>
        <label>1</label>
    </ligand>
</feature>
<feature type="binding site" evidence="1">
    <location>
        <position position="187"/>
    </location>
    <ligand>
        <name>Zn(2+)</name>
        <dbReference type="ChEBI" id="CHEBI:29105"/>
        <label>1</label>
    </ligand>
</feature>
<feature type="binding site" evidence="1">
    <location>
        <position position="188"/>
    </location>
    <ligand>
        <name>an N-acyl-1,2-diacyl-sn-glycero-3-phosphoethanolamine</name>
        <dbReference type="ChEBI" id="CHEBI:62537"/>
    </ligand>
</feature>
<feature type="binding site" evidence="1">
    <location>
        <position position="189"/>
    </location>
    <ligand>
        <name>Zn(2+)</name>
        <dbReference type="ChEBI" id="CHEBI:29105"/>
        <label>2</label>
    </ligand>
</feature>
<feature type="binding site" evidence="1">
    <location>
        <position position="190"/>
    </location>
    <ligand>
        <name>Zn(2+)</name>
        <dbReference type="ChEBI" id="CHEBI:29105"/>
        <label>2</label>
    </ligand>
</feature>
<feature type="binding site" evidence="1">
    <location>
        <position position="253"/>
    </location>
    <ligand>
        <name>Zn(2+)</name>
        <dbReference type="ChEBI" id="CHEBI:29105"/>
        <label>1</label>
    </ligand>
</feature>
<feature type="binding site" evidence="1">
    <location>
        <position position="256"/>
    </location>
    <ligand>
        <name>deoxycholate</name>
        <dbReference type="ChEBI" id="CHEBI:23614"/>
    </ligand>
</feature>
<feature type="binding site" evidence="1">
    <location>
        <position position="284"/>
    </location>
    <ligand>
        <name>Zn(2+)</name>
        <dbReference type="ChEBI" id="CHEBI:29105"/>
        <label>1</label>
    </ligand>
</feature>
<feature type="binding site" evidence="1">
    <location>
        <position position="284"/>
    </location>
    <ligand>
        <name>Zn(2+)</name>
        <dbReference type="ChEBI" id="CHEBI:29105"/>
        <label>2</label>
    </ligand>
</feature>
<feature type="binding site" evidence="1">
    <location>
        <position position="321"/>
    </location>
    <ligand>
        <name>an N-acyl-1,2-diacyl-sn-glycero-3-phosphoethanolamine</name>
        <dbReference type="ChEBI" id="CHEBI:62537"/>
    </ligand>
</feature>
<feature type="binding site" evidence="1">
    <location>
        <position position="343"/>
    </location>
    <ligand>
        <name>Zn(2+)</name>
        <dbReference type="ChEBI" id="CHEBI:29105"/>
        <label>2</label>
    </ligand>
</feature>
<feature type="binding site" evidence="1">
    <location>
        <position position="348"/>
    </location>
    <ligand>
        <name>deoxycholate</name>
        <dbReference type="ChEBI" id="CHEBI:23614"/>
    </ligand>
</feature>
<feature type="modified residue" description="N-acetylmethionine" evidence="1">
    <location>
        <position position="1"/>
    </location>
</feature>
<feature type="mutagenesis site" description="Abolishes activity." evidence="5">
    <original>D</original>
    <variation>N</variation>
    <location>
        <position position="147"/>
    </location>
</feature>
<feature type="mutagenesis site" description="Small decrease in activity." evidence="5">
    <original>C</original>
    <variation>S</variation>
    <location>
        <position position="170"/>
    </location>
</feature>
<feature type="mutagenesis site" description="&lt;1% of wild-type activity." evidence="5">
    <original>H</original>
    <variation>N</variation>
    <location>
        <position position="185"/>
    </location>
</feature>
<feature type="mutagenesis site" description="&lt;1% of wild-type activity." evidence="5">
    <original>H</original>
    <variation>N</variation>
    <location>
        <position position="187"/>
    </location>
</feature>
<feature type="mutagenesis site" description="&lt;1% of wild-type activity." evidence="5">
    <original>D</original>
    <variation>N</variation>
    <location>
        <position position="189"/>
    </location>
</feature>
<feature type="mutagenesis site" description="&lt;1% of wild-type activity." evidence="5">
    <original>H</original>
    <variation>N</variation>
    <location>
        <position position="190"/>
    </location>
</feature>
<feature type="mutagenesis site" description="&lt;5% of wild-type activity." evidence="5">
    <original>L</original>
    <variation>F</variation>
    <location>
        <position position="207"/>
    </location>
</feature>
<feature type="mutagenesis site" description="No effect on activity." evidence="5">
    <original>C</original>
    <variation>S</variation>
    <location>
        <position position="222"/>
    </location>
</feature>
<feature type="mutagenesis site" description="Considerable decrease in activity." evidence="5">
    <original>C</original>
    <variation>S</variation>
    <location>
        <position position="224"/>
    </location>
</feature>
<feature type="mutagenesis site" description="No effect on activity." evidence="5">
    <original>C</original>
    <variation>S</variation>
    <location>
        <position position="237"/>
    </location>
</feature>
<feature type="mutagenesis site" description="Abolishes activity." evidence="5">
    <original>H</original>
    <variation>N</variation>
    <location>
        <position position="253"/>
    </location>
</feature>
<feature type="mutagenesis site" description="No effect on activity." evidence="5">
    <original>C</original>
    <variation>S</variation>
    <location>
        <position position="255"/>
    </location>
</feature>
<feature type="mutagenesis site" description="Abolishes activity." evidence="5">
    <original>D</original>
    <variation>N</variation>
    <location>
        <position position="284"/>
    </location>
</feature>
<feature type="mutagenesis site" description="No effect on activity." evidence="5">
    <original>C</original>
    <variation>S</variation>
    <location>
        <position position="288"/>
    </location>
</feature>
<feature type="mutagenesis site" description="Abolishes activity." evidence="5">
    <original>H</original>
    <variation>N</variation>
    <location>
        <position position="321"/>
    </location>
</feature>
<feature type="mutagenesis site" description="4% of wild-type activity." evidence="5">
    <original>H</original>
    <variation>N</variation>
    <location>
        <position position="331"/>
    </location>
</feature>
<feature type="mutagenesis site" description="No effect on activity." evidence="5">
    <original>H</original>
    <variation>N</variation>
    <location>
        <position position="343"/>
    </location>
</feature>
<feature type="mutagenesis site" description="No effect on activity." evidence="5">
    <original>H</original>
    <variation>N</variation>
    <location>
        <position position="353"/>
    </location>
</feature>
<feature type="mutagenesis site" description="&lt;5% of wild-type activity." evidence="5">
    <original>H</original>
    <variation>R</variation>
    <location>
        <position position="380"/>
    </location>
</feature>
<proteinExistence type="evidence at protein level"/>